<name>MDH_POLSJ</name>
<sequence length="328" mass="35085">MSKKPVRVAVTGAAGQIGYALLFRIASGEMLGKDQPVILQLLEVPVEGPQKALKGVMMELDDCAFPLLAGMEAHSDPMTAFKDADYALLVGSRPRGPGMERAELLAVNGAIFTAQGKALNAVASRNVKVLVVGNPANTNAYIAMKSAPDLPRKNFTAMLRLDHNRAASQIAAKTGKAVADIEKLTVWGNHSPTMYADYRFATINGESVAKMINDQEWNANVFLPTVGKRGAAIIEARGLSSAASAANAAIDHMRDWALGTNGKWVTMGIPSDGQYGIPKDTMFGFPVTCENGEYKLVEGLEIDAFSQERINKTLEELQGEQAGVAHLL</sequence>
<proteinExistence type="inferred from homology"/>
<comment type="function">
    <text evidence="2">Catalyzes the reversible oxidation of malate to oxaloacetate.</text>
</comment>
<comment type="catalytic activity">
    <reaction evidence="2">
        <text>(S)-malate + NAD(+) = oxaloacetate + NADH + H(+)</text>
        <dbReference type="Rhea" id="RHEA:21432"/>
        <dbReference type="ChEBI" id="CHEBI:15378"/>
        <dbReference type="ChEBI" id="CHEBI:15589"/>
        <dbReference type="ChEBI" id="CHEBI:16452"/>
        <dbReference type="ChEBI" id="CHEBI:57540"/>
        <dbReference type="ChEBI" id="CHEBI:57945"/>
        <dbReference type="EC" id="1.1.1.37"/>
    </reaction>
</comment>
<comment type="similarity">
    <text evidence="2">Belongs to the LDH/MDH superfamily. MDH type 2 family.</text>
</comment>
<dbReference type="EC" id="1.1.1.37" evidence="2"/>
<dbReference type="EMBL" id="CP000316">
    <property type="protein sequence ID" value="ABE45503.1"/>
    <property type="molecule type" value="Genomic_DNA"/>
</dbReference>
<dbReference type="RefSeq" id="WP_011484497.1">
    <property type="nucleotide sequence ID" value="NC_007948.1"/>
</dbReference>
<dbReference type="SMR" id="Q126N9"/>
<dbReference type="STRING" id="296591.Bpro_3598"/>
<dbReference type="KEGG" id="pol:Bpro_3598"/>
<dbReference type="eggNOG" id="COG0039">
    <property type="taxonomic scope" value="Bacteria"/>
</dbReference>
<dbReference type="HOGENOM" id="CLU_040727_2_0_4"/>
<dbReference type="OrthoDB" id="9802969at2"/>
<dbReference type="Proteomes" id="UP000001983">
    <property type="component" value="Chromosome"/>
</dbReference>
<dbReference type="GO" id="GO:0030060">
    <property type="term" value="F:L-malate dehydrogenase (NAD+) activity"/>
    <property type="evidence" value="ECO:0007669"/>
    <property type="project" value="UniProtKB-UniRule"/>
</dbReference>
<dbReference type="GO" id="GO:0006108">
    <property type="term" value="P:malate metabolic process"/>
    <property type="evidence" value="ECO:0007669"/>
    <property type="project" value="InterPro"/>
</dbReference>
<dbReference type="GO" id="GO:0006099">
    <property type="term" value="P:tricarboxylic acid cycle"/>
    <property type="evidence" value="ECO:0007669"/>
    <property type="project" value="UniProtKB-UniRule"/>
</dbReference>
<dbReference type="CDD" id="cd01338">
    <property type="entry name" value="MDH_chloroplast-like"/>
    <property type="match status" value="1"/>
</dbReference>
<dbReference type="FunFam" id="3.40.50.720:FF:000010">
    <property type="entry name" value="Malate dehydrogenase"/>
    <property type="match status" value="1"/>
</dbReference>
<dbReference type="FunFam" id="3.90.110.10:FF:000002">
    <property type="entry name" value="Malate dehydrogenase"/>
    <property type="match status" value="1"/>
</dbReference>
<dbReference type="Gene3D" id="3.90.110.10">
    <property type="entry name" value="Lactate dehydrogenase/glycoside hydrolase, family 4, C-terminal"/>
    <property type="match status" value="1"/>
</dbReference>
<dbReference type="Gene3D" id="3.40.50.720">
    <property type="entry name" value="NAD(P)-binding Rossmann-like Domain"/>
    <property type="match status" value="1"/>
</dbReference>
<dbReference type="HAMAP" id="MF_01517">
    <property type="entry name" value="Malate_dehydrog_2"/>
    <property type="match status" value="1"/>
</dbReference>
<dbReference type="InterPro" id="IPR001557">
    <property type="entry name" value="L-lactate/malate_DH"/>
</dbReference>
<dbReference type="InterPro" id="IPR022383">
    <property type="entry name" value="Lactate/malate_DH_C"/>
</dbReference>
<dbReference type="InterPro" id="IPR001236">
    <property type="entry name" value="Lactate/malate_DH_N"/>
</dbReference>
<dbReference type="InterPro" id="IPR015955">
    <property type="entry name" value="Lactate_DH/Glyco_Ohase_4_C"/>
</dbReference>
<dbReference type="InterPro" id="IPR010945">
    <property type="entry name" value="Malate_DH_type2"/>
</dbReference>
<dbReference type="InterPro" id="IPR036291">
    <property type="entry name" value="NAD(P)-bd_dom_sf"/>
</dbReference>
<dbReference type="NCBIfam" id="TIGR01759">
    <property type="entry name" value="MalateDH-SF1"/>
    <property type="match status" value="1"/>
</dbReference>
<dbReference type="NCBIfam" id="NF003916">
    <property type="entry name" value="PRK05442.1"/>
    <property type="match status" value="1"/>
</dbReference>
<dbReference type="PANTHER" id="PTHR23382">
    <property type="entry name" value="MALATE DEHYDROGENASE"/>
    <property type="match status" value="1"/>
</dbReference>
<dbReference type="Pfam" id="PF02866">
    <property type="entry name" value="Ldh_1_C"/>
    <property type="match status" value="1"/>
</dbReference>
<dbReference type="Pfam" id="PF00056">
    <property type="entry name" value="Ldh_1_N"/>
    <property type="match status" value="1"/>
</dbReference>
<dbReference type="PIRSF" id="PIRSF000102">
    <property type="entry name" value="Lac_mal_DH"/>
    <property type="match status" value="1"/>
</dbReference>
<dbReference type="SUPFAM" id="SSF56327">
    <property type="entry name" value="LDH C-terminal domain-like"/>
    <property type="match status" value="1"/>
</dbReference>
<dbReference type="SUPFAM" id="SSF51735">
    <property type="entry name" value="NAD(P)-binding Rossmann-fold domains"/>
    <property type="match status" value="1"/>
</dbReference>
<reference key="1">
    <citation type="journal article" date="2008" name="Appl. Environ. Microbiol.">
        <title>The genome of Polaromonas sp. strain JS666: insights into the evolution of a hydrocarbon- and xenobiotic-degrading bacterium, and features of relevance to biotechnology.</title>
        <authorList>
            <person name="Mattes T.E."/>
            <person name="Alexander A.K."/>
            <person name="Richardson P.M."/>
            <person name="Munk A.C."/>
            <person name="Han C.S."/>
            <person name="Stothard P."/>
            <person name="Coleman N.V."/>
        </authorList>
    </citation>
    <scope>NUCLEOTIDE SEQUENCE [LARGE SCALE GENOMIC DNA]</scope>
    <source>
        <strain>JS666 / ATCC BAA-500</strain>
    </source>
</reference>
<keyword id="KW-0520">NAD</keyword>
<keyword id="KW-0560">Oxidoreductase</keyword>
<keyword id="KW-1185">Reference proteome</keyword>
<keyword id="KW-0816">Tricarboxylic acid cycle</keyword>
<organism>
    <name type="scientific">Polaromonas sp. (strain JS666 / ATCC BAA-500)</name>
    <dbReference type="NCBI Taxonomy" id="296591"/>
    <lineage>
        <taxon>Bacteria</taxon>
        <taxon>Pseudomonadati</taxon>
        <taxon>Pseudomonadota</taxon>
        <taxon>Betaproteobacteria</taxon>
        <taxon>Burkholderiales</taxon>
        <taxon>Comamonadaceae</taxon>
        <taxon>Polaromonas</taxon>
    </lineage>
</organism>
<feature type="initiator methionine" description="Removed" evidence="1">
    <location>
        <position position="1"/>
    </location>
</feature>
<feature type="chain" id="PRO_0000294399" description="Malate dehydrogenase">
    <location>
        <begin position="2"/>
        <end position="328"/>
    </location>
</feature>
<feature type="active site" description="Proton acceptor" evidence="2">
    <location>
        <position position="190"/>
    </location>
</feature>
<feature type="binding site" evidence="2">
    <location>
        <begin position="12"/>
        <end position="18"/>
    </location>
    <ligand>
        <name>NAD(+)</name>
        <dbReference type="ChEBI" id="CHEBI:57540"/>
    </ligand>
</feature>
<feature type="binding site" evidence="2">
    <location>
        <position position="95"/>
    </location>
    <ligand>
        <name>substrate</name>
    </ligand>
</feature>
<feature type="binding site" evidence="2">
    <location>
        <position position="101"/>
    </location>
    <ligand>
        <name>substrate</name>
    </ligand>
</feature>
<feature type="binding site" evidence="2">
    <location>
        <position position="108"/>
    </location>
    <ligand>
        <name>NAD(+)</name>
        <dbReference type="ChEBI" id="CHEBI:57540"/>
    </ligand>
</feature>
<feature type="binding site" evidence="2">
    <location>
        <position position="115"/>
    </location>
    <ligand>
        <name>NAD(+)</name>
        <dbReference type="ChEBI" id="CHEBI:57540"/>
    </ligand>
</feature>
<feature type="binding site" evidence="2">
    <location>
        <begin position="132"/>
        <end position="134"/>
    </location>
    <ligand>
        <name>NAD(+)</name>
        <dbReference type="ChEBI" id="CHEBI:57540"/>
    </ligand>
</feature>
<feature type="binding site" evidence="2">
    <location>
        <position position="134"/>
    </location>
    <ligand>
        <name>substrate</name>
    </ligand>
</feature>
<feature type="binding site" evidence="2">
    <location>
        <position position="165"/>
    </location>
    <ligand>
        <name>substrate</name>
    </ligand>
</feature>
<evidence type="ECO:0000250" key="1"/>
<evidence type="ECO:0000255" key="2">
    <source>
        <dbReference type="HAMAP-Rule" id="MF_01517"/>
    </source>
</evidence>
<accession>Q126N9</accession>
<protein>
    <recommendedName>
        <fullName evidence="2">Malate dehydrogenase</fullName>
        <ecNumber evidence="2">1.1.1.37</ecNumber>
    </recommendedName>
</protein>
<gene>
    <name evidence="2" type="primary">mdh</name>
    <name type="ordered locus">Bpro_3598</name>
</gene>